<gene>
    <name evidence="1" type="primary">rpsF</name>
    <name type="ordered locus">NMC1260</name>
</gene>
<sequence length="122" mass="13935">MRHYEIVFIVHPDQSEQVPAMVERYKTMIAEANGKIHRLEDWGRRQLAYPINKIHKAHYVLMNIETTPEVVEELETAFRFNDAVLRHLTIKTKHAVTEASPMLGGEKAKNLLSGASEEAVAQ</sequence>
<evidence type="ECO:0000255" key="1">
    <source>
        <dbReference type="HAMAP-Rule" id="MF_00360"/>
    </source>
</evidence>
<evidence type="ECO:0000305" key="2"/>
<keyword id="KW-0687">Ribonucleoprotein</keyword>
<keyword id="KW-0689">Ribosomal protein</keyword>
<keyword id="KW-0694">RNA-binding</keyword>
<keyword id="KW-0699">rRNA-binding</keyword>
<dbReference type="EMBL" id="AM421808">
    <property type="protein sequence ID" value="CAM10493.1"/>
    <property type="molecule type" value="Genomic_DNA"/>
</dbReference>
<dbReference type="RefSeq" id="WP_002213302.1">
    <property type="nucleotide sequence ID" value="NC_008767.1"/>
</dbReference>
<dbReference type="SMR" id="A1KUF0"/>
<dbReference type="GeneID" id="93385877"/>
<dbReference type="KEGG" id="nmc:NMC1260"/>
<dbReference type="HOGENOM" id="CLU_113441_6_1_4"/>
<dbReference type="Proteomes" id="UP000002286">
    <property type="component" value="Chromosome"/>
</dbReference>
<dbReference type="GO" id="GO:0022627">
    <property type="term" value="C:cytosolic small ribosomal subunit"/>
    <property type="evidence" value="ECO:0007669"/>
    <property type="project" value="TreeGrafter"/>
</dbReference>
<dbReference type="GO" id="GO:0070181">
    <property type="term" value="F:small ribosomal subunit rRNA binding"/>
    <property type="evidence" value="ECO:0007669"/>
    <property type="project" value="TreeGrafter"/>
</dbReference>
<dbReference type="GO" id="GO:0003735">
    <property type="term" value="F:structural constituent of ribosome"/>
    <property type="evidence" value="ECO:0007669"/>
    <property type="project" value="InterPro"/>
</dbReference>
<dbReference type="GO" id="GO:0006412">
    <property type="term" value="P:translation"/>
    <property type="evidence" value="ECO:0007669"/>
    <property type="project" value="UniProtKB-UniRule"/>
</dbReference>
<dbReference type="CDD" id="cd00473">
    <property type="entry name" value="bS6"/>
    <property type="match status" value="1"/>
</dbReference>
<dbReference type="FunFam" id="3.30.70.60:FF:000003">
    <property type="entry name" value="30S ribosomal protein S6"/>
    <property type="match status" value="1"/>
</dbReference>
<dbReference type="Gene3D" id="3.30.70.60">
    <property type="match status" value="1"/>
</dbReference>
<dbReference type="HAMAP" id="MF_00360">
    <property type="entry name" value="Ribosomal_bS6"/>
    <property type="match status" value="1"/>
</dbReference>
<dbReference type="InterPro" id="IPR000529">
    <property type="entry name" value="Ribosomal_bS6"/>
</dbReference>
<dbReference type="InterPro" id="IPR020815">
    <property type="entry name" value="Ribosomal_bS6_CS"/>
</dbReference>
<dbReference type="InterPro" id="IPR035980">
    <property type="entry name" value="Ribosomal_bS6_sf"/>
</dbReference>
<dbReference type="InterPro" id="IPR020814">
    <property type="entry name" value="Ribosomal_S6_plastid/chlpt"/>
</dbReference>
<dbReference type="InterPro" id="IPR014717">
    <property type="entry name" value="Transl_elong_EF1B/ribsomal_bS6"/>
</dbReference>
<dbReference type="NCBIfam" id="TIGR00166">
    <property type="entry name" value="S6"/>
    <property type="match status" value="1"/>
</dbReference>
<dbReference type="PANTHER" id="PTHR21011">
    <property type="entry name" value="MITOCHONDRIAL 28S RIBOSOMAL PROTEIN S6"/>
    <property type="match status" value="1"/>
</dbReference>
<dbReference type="PANTHER" id="PTHR21011:SF1">
    <property type="entry name" value="SMALL RIBOSOMAL SUBUNIT PROTEIN BS6M"/>
    <property type="match status" value="1"/>
</dbReference>
<dbReference type="Pfam" id="PF01250">
    <property type="entry name" value="Ribosomal_S6"/>
    <property type="match status" value="1"/>
</dbReference>
<dbReference type="SUPFAM" id="SSF54995">
    <property type="entry name" value="Ribosomal protein S6"/>
    <property type="match status" value="1"/>
</dbReference>
<dbReference type="PROSITE" id="PS01048">
    <property type="entry name" value="RIBOSOMAL_S6"/>
    <property type="match status" value="1"/>
</dbReference>
<protein>
    <recommendedName>
        <fullName evidence="1">Small ribosomal subunit protein bS6</fullName>
    </recommendedName>
    <alternativeName>
        <fullName evidence="2">30S ribosomal protein S6</fullName>
    </alternativeName>
</protein>
<accession>A1KUF0</accession>
<feature type="chain" id="PRO_1000005299" description="Small ribosomal subunit protein bS6">
    <location>
        <begin position="1"/>
        <end position="122"/>
    </location>
</feature>
<organism>
    <name type="scientific">Neisseria meningitidis serogroup C / serotype 2a (strain ATCC 700532 / DSM 15464 / FAM18)</name>
    <dbReference type="NCBI Taxonomy" id="272831"/>
    <lineage>
        <taxon>Bacteria</taxon>
        <taxon>Pseudomonadati</taxon>
        <taxon>Pseudomonadota</taxon>
        <taxon>Betaproteobacteria</taxon>
        <taxon>Neisseriales</taxon>
        <taxon>Neisseriaceae</taxon>
        <taxon>Neisseria</taxon>
    </lineage>
</organism>
<comment type="function">
    <text evidence="1">Binds together with bS18 to 16S ribosomal RNA.</text>
</comment>
<comment type="similarity">
    <text evidence="1">Belongs to the bacterial ribosomal protein bS6 family.</text>
</comment>
<name>RS6_NEIMF</name>
<reference key="1">
    <citation type="journal article" date="2007" name="PLoS Genet.">
        <title>Meningococcal genetic variation mechanisms viewed through comparative analysis of serogroup C strain FAM18.</title>
        <authorList>
            <person name="Bentley S.D."/>
            <person name="Vernikos G.S."/>
            <person name="Snyder L.A.S."/>
            <person name="Churcher C."/>
            <person name="Arrowsmith C."/>
            <person name="Chillingworth T."/>
            <person name="Cronin A."/>
            <person name="Davis P.H."/>
            <person name="Holroyd N.E."/>
            <person name="Jagels K."/>
            <person name="Maddison M."/>
            <person name="Moule S."/>
            <person name="Rabbinowitsch E."/>
            <person name="Sharp S."/>
            <person name="Unwin L."/>
            <person name="Whitehead S."/>
            <person name="Quail M.A."/>
            <person name="Achtman M."/>
            <person name="Barrell B.G."/>
            <person name="Saunders N.J."/>
            <person name="Parkhill J."/>
        </authorList>
    </citation>
    <scope>NUCLEOTIDE SEQUENCE [LARGE SCALE GENOMIC DNA]</scope>
    <source>
        <strain>ATCC 700532 / DSM 15464 / FAM18</strain>
    </source>
</reference>
<proteinExistence type="inferred from homology"/>